<reference key="1">
    <citation type="journal article" date="2005" name="Nucleic Acids Res.">
        <title>Genome dynamics and diversity of Shigella species, the etiologic agents of bacillary dysentery.</title>
        <authorList>
            <person name="Yang F."/>
            <person name="Yang J."/>
            <person name="Zhang X."/>
            <person name="Chen L."/>
            <person name="Jiang Y."/>
            <person name="Yan Y."/>
            <person name="Tang X."/>
            <person name="Wang J."/>
            <person name="Xiong Z."/>
            <person name="Dong J."/>
            <person name="Xue Y."/>
            <person name="Zhu Y."/>
            <person name="Xu X."/>
            <person name="Sun L."/>
            <person name="Chen S."/>
            <person name="Nie H."/>
            <person name="Peng J."/>
            <person name="Xu J."/>
            <person name="Wang Y."/>
            <person name="Yuan Z."/>
            <person name="Wen Y."/>
            <person name="Yao Z."/>
            <person name="Shen Y."/>
            <person name="Qiang B."/>
            <person name="Hou Y."/>
            <person name="Yu J."/>
            <person name="Jin Q."/>
        </authorList>
    </citation>
    <scope>NUCLEOTIDE SEQUENCE [LARGE SCALE GENOMIC DNA]</scope>
    <source>
        <strain>Sd197</strain>
    </source>
</reference>
<dbReference type="EMBL" id="CP000034">
    <property type="protein sequence ID" value="ABB63933.1"/>
    <property type="molecule type" value="Genomic_DNA"/>
</dbReference>
<dbReference type="RefSeq" id="WP_000896498.1">
    <property type="nucleotide sequence ID" value="NC_007606.1"/>
</dbReference>
<dbReference type="RefSeq" id="YP_405424.1">
    <property type="nucleotide sequence ID" value="NC_007606.1"/>
</dbReference>
<dbReference type="SMR" id="Q329S2"/>
<dbReference type="STRING" id="300267.SDY_4015"/>
<dbReference type="EnsemblBacteria" id="ABB63933">
    <property type="protein sequence ID" value="ABB63933"/>
    <property type="gene ID" value="SDY_4015"/>
</dbReference>
<dbReference type="GeneID" id="93778234"/>
<dbReference type="KEGG" id="sdy:SDY_4015"/>
<dbReference type="PATRIC" id="fig|300267.13.peg.4728"/>
<dbReference type="HOGENOM" id="CLU_050669_0_1_6"/>
<dbReference type="Proteomes" id="UP000002716">
    <property type="component" value="Chromosome"/>
</dbReference>
<dbReference type="GO" id="GO:0005886">
    <property type="term" value="C:plasma membrane"/>
    <property type="evidence" value="ECO:0007669"/>
    <property type="project" value="UniProtKB-SubCell"/>
</dbReference>
<dbReference type="GO" id="GO:0045259">
    <property type="term" value="C:proton-transporting ATP synthase complex"/>
    <property type="evidence" value="ECO:0007669"/>
    <property type="project" value="UniProtKB-KW"/>
</dbReference>
<dbReference type="GO" id="GO:0005524">
    <property type="term" value="F:ATP binding"/>
    <property type="evidence" value="ECO:0007669"/>
    <property type="project" value="UniProtKB-UniRule"/>
</dbReference>
<dbReference type="GO" id="GO:0046933">
    <property type="term" value="F:proton-transporting ATP synthase activity, rotational mechanism"/>
    <property type="evidence" value="ECO:0007669"/>
    <property type="project" value="UniProtKB-UniRule"/>
</dbReference>
<dbReference type="GO" id="GO:0042777">
    <property type="term" value="P:proton motive force-driven plasma membrane ATP synthesis"/>
    <property type="evidence" value="ECO:0007669"/>
    <property type="project" value="UniProtKB-UniRule"/>
</dbReference>
<dbReference type="CDD" id="cd12151">
    <property type="entry name" value="F1-ATPase_gamma"/>
    <property type="match status" value="1"/>
</dbReference>
<dbReference type="FunFam" id="1.10.287.80:FF:000005">
    <property type="entry name" value="ATP synthase gamma chain"/>
    <property type="match status" value="2"/>
</dbReference>
<dbReference type="FunFam" id="3.40.1380.10:FF:000001">
    <property type="entry name" value="ATP synthase gamma chain"/>
    <property type="match status" value="1"/>
</dbReference>
<dbReference type="Gene3D" id="3.40.1380.10">
    <property type="match status" value="1"/>
</dbReference>
<dbReference type="Gene3D" id="1.10.287.80">
    <property type="entry name" value="ATP synthase, gamma subunit, helix hairpin domain"/>
    <property type="match status" value="1"/>
</dbReference>
<dbReference type="HAMAP" id="MF_00815">
    <property type="entry name" value="ATP_synth_gamma_bact"/>
    <property type="match status" value="1"/>
</dbReference>
<dbReference type="InterPro" id="IPR035968">
    <property type="entry name" value="ATP_synth_F1_ATPase_gsu"/>
</dbReference>
<dbReference type="InterPro" id="IPR000131">
    <property type="entry name" value="ATP_synth_F1_gsu"/>
</dbReference>
<dbReference type="InterPro" id="IPR023632">
    <property type="entry name" value="ATP_synth_F1_gsu_CS"/>
</dbReference>
<dbReference type="NCBIfam" id="TIGR01146">
    <property type="entry name" value="ATPsyn_F1gamma"/>
    <property type="match status" value="1"/>
</dbReference>
<dbReference type="NCBIfam" id="NF004144">
    <property type="entry name" value="PRK05621.1-1"/>
    <property type="match status" value="1"/>
</dbReference>
<dbReference type="PANTHER" id="PTHR11693">
    <property type="entry name" value="ATP SYNTHASE GAMMA CHAIN"/>
    <property type="match status" value="1"/>
</dbReference>
<dbReference type="PANTHER" id="PTHR11693:SF22">
    <property type="entry name" value="ATP SYNTHASE SUBUNIT GAMMA, MITOCHONDRIAL"/>
    <property type="match status" value="1"/>
</dbReference>
<dbReference type="Pfam" id="PF00231">
    <property type="entry name" value="ATP-synt"/>
    <property type="match status" value="1"/>
</dbReference>
<dbReference type="PRINTS" id="PR00126">
    <property type="entry name" value="ATPASEGAMMA"/>
</dbReference>
<dbReference type="SUPFAM" id="SSF52943">
    <property type="entry name" value="ATP synthase (F1-ATPase), gamma subunit"/>
    <property type="match status" value="1"/>
</dbReference>
<dbReference type="PROSITE" id="PS00153">
    <property type="entry name" value="ATPASE_GAMMA"/>
    <property type="match status" value="1"/>
</dbReference>
<evidence type="ECO:0000255" key="1">
    <source>
        <dbReference type="HAMAP-Rule" id="MF_00815"/>
    </source>
</evidence>
<organism>
    <name type="scientific">Shigella dysenteriae serotype 1 (strain Sd197)</name>
    <dbReference type="NCBI Taxonomy" id="300267"/>
    <lineage>
        <taxon>Bacteria</taxon>
        <taxon>Pseudomonadati</taxon>
        <taxon>Pseudomonadota</taxon>
        <taxon>Gammaproteobacteria</taxon>
        <taxon>Enterobacterales</taxon>
        <taxon>Enterobacteriaceae</taxon>
        <taxon>Shigella</taxon>
    </lineage>
</organism>
<proteinExistence type="inferred from homology"/>
<name>ATPG_SHIDS</name>
<keyword id="KW-0066">ATP synthesis</keyword>
<keyword id="KW-0997">Cell inner membrane</keyword>
<keyword id="KW-1003">Cell membrane</keyword>
<keyword id="KW-0139">CF(1)</keyword>
<keyword id="KW-0375">Hydrogen ion transport</keyword>
<keyword id="KW-0406">Ion transport</keyword>
<keyword id="KW-0472">Membrane</keyword>
<keyword id="KW-1185">Reference proteome</keyword>
<keyword id="KW-0813">Transport</keyword>
<comment type="function">
    <text evidence="1">Produces ATP from ADP in the presence of a proton gradient across the membrane. The gamma chain is believed to be important in regulating ATPase activity and the flow of protons through the CF(0) complex.</text>
</comment>
<comment type="subunit">
    <text evidence="1">F-type ATPases have 2 components, CF(1) - the catalytic core - and CF(0) - the membrane proton channel. CF(1) has five subunits: alpha(3), beta(3), gamma(1), delta(1), epsilon(1). CF(0) has three main subunits: a, b and c.</text>
</comment>
<comment type="subcellular location">
    <subcellularLocation>
        <location evidence="1">Cell inner membrane</location>
        <topology evidence="1">Peripheral membrane protein</topology>
    </subcellularLocation>
</comment>
<comment type="similarity">
    <text evidence="1">Belongs to the ATPase gamma chain family.</text>
</comment>
<protein>
    <recommendedName>
        <fullName evidence="1">ATP synthase gamma chain</fullName>
    </recommendedName>
    <alternativeName>
        <fullName evidence="1">ATP synthase F1 sector gamma subunit</fullName>
    </alternativeName>
    <alternativeName>
        <fullName evidence="1">F-ATPase gamma subunit</fullName>
    </alternativeName>
</protein>
<feature type="chain" id="PRO_1000053336" description="ATP synthase gamma chain">
    <location>
        <begin position="1"/>
        <end position="287"/>
    </location>
</feature>
<gene>
    <name evidence="1" type="primary">atpG</name>
    <name type="ordered locus">SDY_4015</name>
</gene>
<accession>Q329S2</accession>
<sequence>MAGAKEIRSKIASVQNTQKITKAMEMVAASKMRKSQDRMAASRPYAETMRKVIGHLAHGNLEYKHPYLEDRDVKRVGYLVVSTDRGLCGGLNINLFKKLLAEMKTWTDKGVQCDLAMIGSKGVSFFNSVGGNVVAQVTGMGDNPSLSELIGPVKVMLQAYDEGRLDKLYIVSNKFINTMSQVPTISQLLPLPASDDDDLKHKSWDYLYEPDPKALLDTLLRRYVESQVYQGVVENLASEQAARMVAMKAATDNGGSLIKELQLVYNKARQASITQELTEIVSGAAAV</sequence>